<gene>
    <name evidence="1" type="primary">tusD</name>
    <name type="ordered locus">ESA_04396</name>
</gene>
<feature type="chain" id="PRO_1000013254" description="Sulfurtransferase TusD">
    <location>
        <begin position="1"/>
        <end position="128"/>
    </location>
</feature>
<feature type="active site" description="Cysteine persulfide intermediate" evidence="1">
    <location>
        <position position="78"/>
    </location>
</feature>
<comment type="function">
    <text evidence="1">Part of a sulfur-relay system required for 2-thiolation of 5-methylaminomethyl-2-thiouridine (mnm(5)s(2)U) at tRNA wobble positions. Accepts sulfur from TusA and transfers it in turn to TusE.</text>
</comment>
<comment type="subunit">
    <text evidence="1">Heterohexamer, formed by a dimer of trimers. The hexameric TusBCD complex contains 2 copies each of TusB, TusC and TusD. The TusBCD complex interacts with TusE.</text>
</comment>
<comment type="subcellular location">
    <subcellularLocation>
        <location evidence="1">Cytoplasm</location>
    </subcellularLocation>
</comment>
<comment type="similarity">
    <text evidence="1">Belongs to the DsrE/TusD family.</text>
</comment>
<keyword id="KW-0963">Cytoplasm</keyword>
<keyword id="KW-1185">Reference proteome</keyword>
<keyword id="KW-0808">Transferase</keyword>
<keyword id="KW-0819">tRNA processing</keyword>
<dbReference type="EC" id="2.8.1.-" evidence="1"/>
<dbReference type="EMBL" id="CP000783">
    <property type="protein sequence ID" value="ABU79575.1"/>
    <property type="molecule type" value="Genomic_DNA"/>
</dbReference>
<dbReference type="RefSeq" id="WP_007899709.1">
    <property type="nucleotide sequence ID" value="NC_009778.1"/>
</dbReference>
<dbReference type="SMR" id="A7MKJ5"/>
<dbReference type="GeneID" id="56732990"/>
<dbReference type="KEGG" id="esa:ESA_04396"/>
<dbReference type="HOGENOM" id="CLU_132095_0_0_6"/>
<dbReference type="Proteomes" id="UP000000260">
    <property type="component" value="Chromosome"/>
</dbReference>
<dbReference type="GO" id="GO:1990228">
    <property type="term" value="C:sulfurtransferase complex"/>
    <property type="evidence" value="ECO:0007669"/>
    <property type="project" value="TreeGrafter"/>
</dbReference>
<dbReference type="GO" id="GO:0097163">
    <property type="term" value="F:sulfur carrier activity"/>
    <property type="evidence" value="ECO:0007669"/>
    <property type="project" value="TreeGrafter"/>
</dbReference>
<dbReference type="GO" id="GO:0016783">
    <property type="term" value="F:sulfurtransferase activity"/>
    <property type="evidence" value="ECO:0007669"/>
    <property type="project" value="UniProtKB-UniRule"/>
</dbReference>
<dbReference type="GO" id="GO:0002143">
    <property type="term" value="P:tRNA wobble position uridine thiolation"/>
    <property type="evidence" value="ECO:0007669"/>
    <property type="project" value="TreeGrafter"/>
</dbReference>
<dbReference type="FunFam" id="3.40.1260.10:FF:000001">
    <property type="entry name" value="Sulfurtransferase TusD"/>
    <property type="match status" value="1"/>
</dbReference>
<dbReference type="Gene3D" id="3.40.1260.10">
    <property type="entry name" value="DsrEFH-like"/>
    <property type="match status" value="1"/>
</dbReference>
<dbReference type="HAMAP" id="MF_00390">
    <property type="entry name" value="Thiourid_synth_D"/>
    <property type="match status" value="1"/>
</dbReference>
<dbReference type="InterPro" id="IPR027396">
    <property type="entry name" value="DsrEFH-like"/>
</dbReference>
<dbReference type="InterPro" id="IPR003787">
    <property type="entry name" value="Sulphur_relay_DsrE/F-like"/>
</dbReference>
<dbReference type="InterPro" id="IPR017463">
    <property type="entry name" value="Sulphur_relay_TusD/DsrE"/>
</dbReference>
<dbReference type="NCBIfam" id="NF001237">
    <property type="entry name" value="PRK00207.1"/>
    <property type="match status" value="1"/>
</dbReference>
<dbReference type="NCBIfam" id="TIGR03012">
    <property type="entry name" value="sulf_tusD_dsrE"/>
    <property type="match status" value="1"/>
</dbReference>
<dbReference type="PANTHER" id="PTHR34874">
    <property type="entry name" value="PROTEIN YCHN"/>
    <property type="match status" value="1"/>
</dbReference>
<dbReference type="PANTHER" id="PTHR34874:SF3">
    <property type="entry name" value="SULFURTRANSFERASE TUSD"/>
    <property type="match status" value="1"/>
</dbReference>
<dbReference type="Pfam" id="PF02635">
    <property type="entry name" value="DsrE"/>
    <property type="match status" value="1"/>
</dbReference>
<dbReference type="SUPFAM" id="SSF75169">
    <property type="entry name" value="DsrEFH-like"/>
    <property type="match status" value="1"/>
</dbReference>
<protein>
    <recommendedName>
        <fullName evidence="1">Sulfurtransferase TusD</fullName>
        <ecNumber evidence="1">2.8.1.-</ecNumber>
    </recommendedName>
    <alternativeName>
        <fullName evidence="1">tRNA 2-thiouridine synthesizing protein D</fullName>
    </alternativeName>
</protein>
<proteinExistence type="inferred from homology"/>
<name>TUSD_CROS8</name>
<organism>
    <name type="scientific">Cronobacter sakazakii (strain ATCC BAA-894)</name>
    <name type="common">Enterobacter sakazakii</name>
    <dbReference type="NCBI Taxonomy" id="290339"/>
    <lineage>
        <taxon>Bacteria</taxon>
        <taxon>Pseudomonadati</taxon>
        <taxon>Pseudomonadota</taxon>
        <taxon>Gammaproteobacteria</taxon>
        <taxon>Enterobacterales</taxon>
        <taxon>Enterobacteriaceae</taxon>
        <taxon>Cronobacter</taxon>
    </lineage>
</organism>
<sequence>MRFTLMVTGPAYGTQQASSALQFAKALLAEGHSLESVFFYREGVYNANQFTSPASDEFDLVRAWQQLHDENGVALHICVAAALRRGVTDENEARAQGLPGANLQPGFQLSGLGALAEAALTCDRVVEF</sequence>
<reference key="1">
    <citation type="journal article" date="2010" name="PLoS ONE">
        <title>Genome sequence of Cronobacter sakazakii BAA-894 and comparative genomic hybridization analysis with other Cronobacter species.</title>
        <authorList>
            <person name="Kucerova E."/>
            <person name="Clifton S.W."/>
            <person name="Xia X.Q."/>
            <person name="Long F."/>
            <person name="Porwollik S."/>
            <person name="Fulton L."/>
            <person name="Fronick C."/>
            <person name="Minx P."/>
            <person name="Kyung K."/>
            <person name="Warren W."/>
            <person name="Fulton R."/>
            <person name="Feng D."/>
            <person name="Wollam A."/>
            <person name="Shah N."/>
            <person name="Bhonagiri V."/>
            <person name="Nash W.E."/>
            <person name="Hallsworth-Pepin K."/>
            <person name="Wilson R.K."/>
            <person name="McClelland M."/>
            <person name="Forsythe S.J."/>
        </authorList>
    </citation>
    <scope>NUCLEOTIDE SEQUENCE [LARGE SCALE GENOMIC DNA]</scope>
    <source>
        <strain>ATCC BAA-894</strain>
    </source>
</reference>
<evidence type="ECO:0000255" key="1">
    <source>
        <dbReference type="HAMAP-Rule" id="MF_00390"/>
    </source>
</evidence>
<accession>A7MKJ5</accession>